<proteinExistence type="inferred from homology"/>
<protein>
    <recommendedName>
        <fullName evidence="1">Holliday junction branch migration complex subunit RuvA</fullName>
    </recommendedName>
</protein>
<gene>
    <name evidence="1" type="primary">ruvA</name>
    <name type="ordered locus">Nther_1797</name>
</gene>
<evidence type="ECO:0000255" key="1">
    <source>
        <dbReference type="HAMAP-Rule" id="MF_00031"/>
    </source>
</evidence>
<reference key="1">
    <citation type="submission" date="2008-04" db="EMBL/GenBank/DDBJ databases">
        <title>Complete sequence of chromosome of Natranaerobius thermophilus JW/NM-WN-LF.</title>
        <authorList>
            <consortium name="US DOE Joint Genome Institute"/>
            <person name="Copeland A."/>
            <person name="Lucas S."/>
            <person name="Lapidus A."/>
            <person name="Glavina del Rio T."/>
            <person name="Dalin E."/>
            <person name="Tice H."/>
            <person name="Bruce D."/>
            <person name="Goodwin L."/>
            <person name="Pitluck S."/>
            <person name="Chertkov O."/>
            <person name="Brettin T."/>
            <person name="Detter J.C."/>
            <person name="Han C."/>
            <person name="Kuske C.R."/>
            <person name="Schmutz J."/>
            <person name="Larimer F."/>
            <person name="Land M."/>
            <person name="Hauser L."/>
            <person name="Kyrpides N."/>
            <person name="Lykidis A."/>
            <person name="Mesbah N.M."/>
            <person name="Wiegel J."/>
        </authorList>
    </citation>
    <scope>NUCLEOTIDE SEQUENCE [LARGE SCALE GENOMIC DNA]</scope>
    <source>
        <strain>ATCC BAA-1301 / DSM 18059 / JW/NM-WN-LF</strain>
    </source>
</reference>
<dbReference type="EMBL" id="CP001034">
    <property type="protein sequence ID" value="ACB85369.1"/>
    <property type="molecule type" value="Genomic_DNA"/>
</dbReference>
<dbReference type="RefSeq" id="WP_012448236.1">
    <property type="nucleotide sequence ID" value="NC_010718.1"/>
</dbReference>
<dbReference type="SMR" id="B2A5L5"/>
<dbReference type="FunCoup" id="B2A5L5">
    <property type="interactions" value="350"/>
</dbReference>
<dbReference type="STRING" id="457570.Nther_1797"/>
<dbReference type="KEGG" id="nth:Nther_1797"/>
<dbReference type="eggNOG" id="COG0632">
    <property type="taxonomic scope" value="Bacteria"/>
</dbReference>
<dbReference type="HOGENOM" id="CLU_087936_3_0_9"/>
<dbReference type="InParanoid" id="B2A5L5"/>
<dbReference type="OrthoDB" id="5293449at2"/>
<dbReference type="Proteomes" id="UP000001683">
    <property type="component" value="Chromosome"/>
</dbReference>
<dbReference type="GO" id="GO:0005737">
    <property type="term" value="C:cytoplasm"/>
    <property type="evidence" value="ECO:0007669"/>
    <property type="project" value="UniProtKB-SubCell"/>
</dbReference>
<dbReference type="GO" id="GO:0009379">
    <property type="term" value="C:Holliday junction helicase complex"/>
    <property type="evidence" value="ECO:0007669"/>
    <property type="project" value="InterPro"/>
</dbReference>
<dbReference type="GO" id="GO:0048476">
    <property type="term" value="C:Holliday junction resolvase complex"/>
    <property type="evidence" value="ECO:0007669"/>
    <property type="project" value="UniProtKB-UniRule"/>
</dbReference>
<dbReference type="GO" id="GO:0005524">
    <property type="term" value="F:ATP binding"/>
    <property type="evidence" value="ECO:0007669"/>
    <property type="project" value="InterPro"/>
</dbReference>
<dbReference type="GO" id="GO:0000400">
    <property type="term" value="F:four-way junction DNA binding"/>
    <property type="evidence" value="ECO:0007669"/>
    <property type="project" value="UniProtKB-UniRule"/>
</dbReference>
<dbReference type="GO" id="GO:0009378">
    <property type="term" value="F:four-way junction helicase activity"/>
    <property type="evidence" value="ECO:0007669"/>
    <property type="project" value="InterPro"/>
</dbReference>
<dbReference type="GO" id="GO:0006310">
    <property type="term" value="P:DNA recombination"/>
    <property type="evidence" value="ECO:0007669"/>
    <property type="project" value="UniProtKB-UniRule"/>
</dbReference>
<dbReference type="GO" id="GO:0006281">
    <property type="term" value="P:DNA repair"/>
    <property type="evidence" value="ECO:0007669"/>
    <property type="project" value="UniProtKB-UniRule"/>
</dbReference>
<dbReference type="CDD" id="cd14332">
    <property type="entry name" value="UBA_RuvA_C"/>
    <property type="match status" value="1"/>
</dbReference>
<dbReference type="Gene3D" id="1.10.150.20">
    <property type="entry name" value="5' to 3' exonuclease, C-terminal subdomain"/>
    <property type="match status" value="1"/>
</dbReference>
<dbReference type="Gene3D" id="1.10.8.10">
    <property type="entry name" value="DNA helicase RuvA subunit, C-terminal domain"/>
    <property type="match status" value="1"/>
</dbReference>
<dbReference type="Gene3D" id="2.40.50.140">
    <property type="entry name" value="Nucleic acid-binding proteins"/>
    <property type="match status" value="1"/>
</dbReference>
<dbReference type="HAMAP" id="MF_00031">
    <property type="entry name" value="DNA_HJ_migration_RuvA"/>
    <property type="match status" value="1"/>
</dbReference>
<dbReference type="InterPro" id="IPR013849">
    <property type="entry name" value="DNA_helicase_Holl-junc_RuvA_I"/>
</dbReference>
<dbReference type="InterPro" id="IPR003583">
    <property type="entry name" value="Hlx-hairpin-Hlx_DNA-bd_motif"/>
</dbReference>
<dbReference type="InterPro" id="IPR012340">
    <property type="entry name" value="NA-bd_OB-fold"/>
</dbReference>
<dbReference type="InterPro" id="IPR000085">
    <property type="entry name" value="RuvA"/>
</dbReference>
<dbReference type="InterPro" id="IPR010994">
    <property type="entry name" value="RuvA_2-like"/>
</dbReference>
<dbReference type="InterPro" id="IPR011114">
    <property type="entry name" value="RuvA_C"/>
</dbReference>
<dbReference type="InterPro" id="IPR036267">
    <property type="entry name" value="RuvA_C_sf"/>
</dbReference>
<dbReference type="NCBIfam" id="TIGR00084">
    <property type="entry name" value="ruvA"/>
    <property type="match status" value="1"/>
</dbReference>
<dbReference type="Pfam" id="PF14520">
    <property type="entry name" value="HHH_5"/>
    <property type="match status" value="1"/>
</dbReference>
<dbReference type="Pfam" id="PF07499">
    <property type="entry name" value="RuvA_C"/>
    <property type="match status" value="1"/>
</dbReference>
<dbReference type="Pfam" id="PF01330">
    <property type="entry name" value="RuvA_N"/>
    <property type="match status" value="1"/>
</dbReference>
<dbReference type="SMART" id="SM00278">
    <property type="entry name" value="HhH1"/>
    <property type="match status" value="2"/>
</dbReference>
<dbReference type="SUPFAM" id="SSF46929">
    <property type="entry name" value="DNA helicase RuvA subunit, C-terminal domain"/>
    <property type="match status" value="1"/>
</dbReference>
<dbReference type="SUPFAM" id="SSF50249">
    <property type="entry name" value="Nucleic acid-binding proteins"/>
    <property type="match status" value="1"/>
</dbReference>
<dbReference type="SUPFAM" id="SSF47781">
    <property type="entry name" value="RuvA domain 2-like"/>
    <property type="match status" value="1"/>
</dbReference>
<keyword id="KW-0963">Cytoplasm</keyword>
<keyword id="KW-0227">DNA damage</keyword>
<keyword id="KW-0233">DNA recombination</keyword>
<keyword id="KW-0234">DNA repair</keyword>
<keyword id="KW-0238">DNA-binding</keyword>
<keyword id="KW-1185">Reference proteome</keyword>
<accession>B2A5L5</accession>
<comment type="function">
    <text evidence="1">The RuvA-RuvB-RuvC complex processes Holliday junction (HJ) DNA during genetic recombination and DNA repair, while the RuvA-RuvB complex plays an important role in the rescue of blocked DNA replication forks via replication fork reversal (RFR). RuvA specifically binds to HJ cruciform DNA, conferring on it an open structure. The RuvB hexamer acts as an ATP-dependent pump, pulling dsDNA into and through the RuvAB complex. HJ branch migration allows RuvC to scan DNA until it finds its consensus sequence, where it cleaves and resolves the cruciform DNA.</text>
</comment>
<comment type="subunit">
    <text evidence="1">Homotetramer. Forms an RuvA(8)-RuvB(12)-Holliday junction (HJ) complex. HJ DNA is sandwiched between 2 RuvA tetramers; dsDNA enters through RuvA and exits via RuvB. An RuvB hexamer assembles on each DNA strand where it exits the tetramer. Each RuvB hexamer is contacted by two RuvA subunits (via domain III) on 2 adjacent RuvB subunits; this complex drives branch migration. In the full resolvosome a probable DNA-RuvA(4)-RuvB(12)-RuvC(2) complex forms which resolves the HJ.</text>
</comment>
<comment type="subcellular location">
    <subcellularLocation>
        <location evidence="1">Cytoplasm</location>
    </subcellularLocation>
</comment>
<comment type="domain">
    <text evidence="1">Has three domains with a flexible linker between the domains II and III and assumes an 'L' shape. Domain III is highly mobile and contacts RuvB.</text>
</comment>
<comment type="similarity">
    <text evidence="1">Belongs to the RuvA family.</text>
</comment>
<organism>
    <name type="scientific">Natranaerobius thermophilus (strain ATCC BAA-1301 / DSM 18059 / JW/NM-WN-LF)</name>
    <dbReference type="NCBI Taxonomy" id="457570"/>
    <lineage>
        <taxon>Bacteria</taxon>
        <taxon>Bacillati</taxon>
        <taxon>Bacillota</taxon>
        <taxon>Clostridia</taxon>
        <taxon>Natranaerobiales</taxon>
        <taxon>Natranaerobiaceae</taxon>
        <taxon>Natranaerobius</taxon>
    </lineage>
</organism>
<name>RUVA_NATTJ</name>
<feature type="chain" id="PRO_1000090343" description="Holliday junction branch migration complex subunit RuvA">
    <location>
        <begin position="1"/>
        <end position="214"/>
    </location>
</feature>
<feature type="region of interest" description="Domain I" evidence="1">
    <location>
        <begin position="1"/>
        <end position="64"/>
    </location>
</feature>
<feature type="region of interest" description="Domain II" evidence="1">
    <location>
        <begin position="65"/>
        <end position="143"/>
    </location>
</feature>
<feature type="region of interest" description="Flexible linker" evidence="1">
    <location>
        <begin position="144"/>
        <end position="160"/>
    </location>
</feature>
<feature type="region of interest" description="Domain III" evidence="1">
    <location>
        <begin position="161"/>
        <end position="214"/>
    </location>
</feature>
<sequence length="214" mass="23728">MITRIRGEMLEITPDYCVVMAGGLGYKIYIPDNCQEEIPDPGQEIDLHTYLSVREDAMTLYGFTSGEQLAVFELIMNVSGIGPKIALALVGTIPPTEFYLSVLNDQVNQLTKVPGIGKKSAQRIILELKEKVKDITSKDAYQDISASEKLDNTGEKLGISTRHKHLDELKAALSSLGYTNREIEKTVDAIQGQITEGQDMEELLRLALQKLNTK</sequence>